<gene>
    <name type="primary">drp35</name>
    <name type="ordered locus">SH0300</name>
</gene>
<comment type="function">
    <text evidence="1">Exhibits lactonase activity. Acts in cells with perturbed membrane integrity and is possibly related to the membrane homeostasis (By similarity).</text>
</comment>
<comment type="cofactor">
    <cofactor evidence="1">
        <name>Ca(2+)</name>
        <dbReference type="ChEBI" id="CHEBI:29108"/>
    </cofactor>
    <text evidence="1">Binds 2 Ca(2+) ions per subunit.</text>
</comment>
<comment type="subcellular location">
    <subcellularLocation>
        <location evidence="1">Cytoplasm</location>
    </subcellularLocation>
</comment>
<comment type="similarity">
    <text evidence="3">Belongs to the SMP-30/CGR1 family.</text>
</comment>
<name>DRP35_STAHJ</name>
<feature type="chain" id="PRO_0000259756" description="Lactonase drp35">
    <location>
        <begin position="1"/>
        <end position="325"/>
    </location>
</feature>
<feature type="active site" description="Proton donor" evidence="2">
    <location>
        <position position="234"/>
    </location>
</feature>
<feature type="binding site" evidence="1">
    <location>
        <position position="46"/>
    </location>
    <ligand>
        <name>Ca(2+)</name>
        <dbReference type="ChEBI" id="CHEBI:29108"/>
        <label>1</label>
        <note>catalytic</note>
    </ligand>
</feature>
<feature type="binding site" evidence="1">
    <location>
        <position position="108"/>
    </location>
    <ligand>
        <name>Ca(2+)</name>
        <dbReference type="ChEBI" id="CHEBI:29108"/>
        <label>2</label>
    </ligand>
</feature>
<feature type="binding site" evidence="1">
    <location>
        <position position="110"/>
    </location>
    <ligand>
        <name>Ca(2+)</name>
        <dbReference type="ChEBI" id="CHEBI:29108"/>
        <label>2</label>
    </ligand>
</feature>
<feature type="binding site" evidence="1">
    <location>
        <position position="128"/>
    </location>
    <ligand>
        <name>Ca(2+)</name>
        <dbReference type="ChEBI" id="CHEBI:29108"/>
        <label>2</label>
    </ligand>
</feature>
<feature type="binding site" evidence="1">
    <location>
        <position position="131"/>
    </location>
    <ligand>
        <name>Ca(2+)</name>
        <dbReference type="ChEBI" id="CHEBI:29108"/>
        <label>2</label>
    </ligand>
</feature>
<feature type="binding site" evidence="1">
    <location>
        <position position="133"/>
    </location>
    <ligand>
        <name>Ca(2+)</name>
        <dbReference type="ChEBI" id="CHEBI:29108"/>
        <label>2</label>
    </ligand>
</feature>
<feature type="binding site" evidence="1">
    <location>
        <position position="136"/>
    </location>
    <ligand>
        <name>Ca(2+)</name>
        <dbReference type="ChEBI" id="CHEBI:29108"/>
        <label>1</label>
        <note>catalytic</note>
    </ligand>
</feature>
<feature type="binding site" evidence="1">
    <location>
        <position position="183"/>
    </location>
    <ligand>
        <name>Ca(2+)</name>
        <dbReference type="ChEBI" id="CHEBI:29108"/>
        <label>1</label>
        <note>catalytic</note>
    </ligand>
</feature>
<feature type="binding site" evidence="1">
    <location>
        <position position="234"/>
    </location>
    <ligand>
        <name>Ca(2+)</name>
        <dbReference type="ChEBI" id="CHEBI:29108"/>
        <label>1</label>
        <note>catalytic</note>
    </ligand>
</feature>
<feature type="binding site" evidence="1">
    <location>
        <position position="235"/>
    </location>
    <ligand>
        <name>Ca(2+)</name>
        <dbReference type="ChEBI" id="CHEBI:29108"/>
        <label>1</label>
        <note>catalytic</note>
    </ligand>
</feature>
<reference key="1">
    <citation type="journal article" date="2005" name="J. Bacteriol.">
        <title>Whole-genome sequencing of Staphylococcus haemolyticus uncovers the extreme plasticity of its genome and the evolution of human-colonizing staphylococcal species.</title>
        <authorList>
            <person name="Takeuchi F."/>
            <person name="Watanabe S."/>
            <person name="Baba T."/>
            <person name="Yuzawa H."/>
            <person name="Ito T."/>
            <person name="Morimoto Y."/>
            <person name="Kuroda M."/>
            <person name="Cui L."/>
            <person name="Takahashi M."/>
            <person name="Ankai A."/>
            <person name="Baba S."/>
            <person name="Fukui S."/>
            <person name="Lee J.C."/>
            <person name="Hiramatsu K."/>
        </authorList>
    </citation>
    <scope>NUCLEOTIDE SEQUENCE [LARGE SCALE GENOMIC DNA]</scope>
    <source>
        <strain>JCSC1435</strain>
    </source>
</reference>
<keyword id="KW-0106">Calcium</keyword>
<keyword id="KW-0963">Cytoplasm</keyword>
<keyword id="KW-0378">Hydrolase</keyword>
<keyword id="KW-0479">Metal-binding</keyword>
<accession>Q4L9R6</accession>
<protein>
    <recommendedName>
        <fullName>Lactonase drp35</fullName>
        <ecNumber>3.1.1.-</ecNumber>
    </recommendedName>
</protein>
<sequence>MTNQSLPKLTYTGASKSAVPIISESELQTVTAEPWLKISDEGLQLEGLVFDRDHNLFLCEVFGGKIFKVDIDTKKVSTAFQSTKQNPAAVKIHKDGRLFTCYLGDFESTGGIFATDEHGEQFEEIISELNTEYCIDDMVFDSKGGFYFTDFRGYSTNPKGGVYYVSPDFKTVTPVIQNISVANGVALSTDEKILWVTETTTNRLHRIQLEDDGVTIAPFGATIPYYFTGHEGPDSVCIDSDDNLYVAMYGQGRVLVFNKRGYPIGQILMPGRDEGKMLRSTHPQFIPGTNQLLICTNDIENDSEGGSMIYTVEAFAKGHESYQFQ</sequence>
<organism>
    <name type="scientific">Staphylococcus haemolyticus (strain JCSC1435)</name>
    <dbReference type="NCBI Taxonomy" id="279808"/>
    <lineage>
        <taxon>Bacteria</taxon>
        <taxon>Bacillati</taxon>
        <taxon>Bacillota</taxon>
        <taxon>Bacilli</taxon>
        <taxon>Bacillales</taxon>
        <taxon>Staphylococcaceae</taxon>
        <taxon>Staphylococcus</taxon>
    </lineage>
</organism>
<evidence type="ECO:0000250" key="1"/>
<evidence type="ECO:0000255" key="2"/>
<evidence type="ECO:0000305" key="3"/>
<proteinExistence type="inferred from homology"/>
<dbReference type="EC" id="3.1.1.-"/>
<dbReference type="EMBL" id="AP006716">
    <property type="protein sequence ID" value="BAE03609.1"/>
    <property type="molecule type" value="Genomic_DNA"/>
</dbReference>
<dbReference type="RefSeq" id="WP_011274629.1">
    <property type="nucleotide sequence ID" value="NC_007168.1"/>
</dbReference>
<dbReference type="SMR" id="Q4L9R6"/>
<dbReference type="KEGG" id="sha:SH0300"/>
<dbReference type="eggNOG" id="COG3386">
    <property type="taxonomic scope" value="Bacteria"/>
</dbReference>
<dbReference type="HOGENOM" id="CLU_036110_2_0_9"/>
<dbReference type="OrthoDB" id="2633250at2"/>
<dbReference type="Proteomes" id="UP000000543">
    <property type="component" value="Chromosome"/>
</dbReference>
<dbReference type="GO" id="GO:0005737">
    <property type="term" value="C:cytoplasm"/>
    <property type="evidence" value="ECO:0007669"/>
    <property type="project" value="UniProtKB-SubCell"/>
</dbReference>
<dbReference type="GO" id="GO:0016787">
    <property type="term" value="F:hydrolase activity"/>
    <property type="evidence" value="ECO:0007669"/>
    <property type="project" value="UniProtKB-KW"/>
</dbReference>
<dbReference type="GO" id="GO:0046872">
    <property type="term" value="F:metal ion binding"/>
    <property type="evidence" value="ECO:0007669"/>
    <property type="project" value="UniProtKB-KW"/>
</dbReference>
<dbReference type="Gene3D" id="2.120.10.30">
    <property type="entry name" value="TolB, C-terminal domain"/>
    <property type="match status" value="1"/>
</dbReference>
<dbReference type="InterPro" id="IPR011042">
    <property type="entry name" value="6-blade_b-propeller_TolB-like"/>
</dbReference>
<dbReference type="InterPro" id="IPR013658">
    <property type="entry name" value="SGL"/>
</dbReference>
<dbReference type="InterPro" id="IPR051262">
    <property type="entry name" value="SMP-30/CGR1_Lactonase"/>
</dbReference>
<dbReference type="PANTHER" id="PTHR47572:SF4">
    <property type="entry name" value="LACTONASE DRP35"/>
    <property type="match status" value="1"/>
</dbReference>
<dbReference type="PANTHER" id="PTHR47572">
    <property type="entry name" value="LIPOPROTEIN-RELATED"/>
    <property type="match status" value="1"/>
</dbReference>
<dbReference type="Pfam" id="PF08450">
    <property type="entry name" value="SGL"/>
    <property type="match status" value="1"/>
</dbReference>
<dbReference type="SUPFAM" id="SSF63829">
    <property type="entry name" value="Calcium-dependent phosphotriesterase"/>
    <property type="match status" value="1"/>
</dbReference>